<proteinExistence type="inferred from homology"/>
<feature type="chain" id="PRO_0000327085" description="Protoheme IX farnesyltransferase">
    <location>
        <begin position="1"/>
        <end position="308"/>
    </location>
</feature>
<feature type="transmembrane region" description="Helical" evidence="1">
    <location>
        <begin position="31"/>
        <end position="51"/>
    </location>
</feature>
<feature type="transmembrane region" description="Helical" evidence="1">
    <location>
        <begin position="53"/>
        <end position="73"/>
    </location>
</feature>
<feature type="transmembrane region" description="Helical" evidence="1">
    <location>
        <begin position="102"/>
        <end position="122"/>
    </location>
</feature>
<feature type="transmembrane region" description="Helical" evidence="1">
    <location>
        <begin position="124"/>
        <end position="144"/>
    </location>
</feature>
<feature type="transmembrane region" description="Helical" evidence="1">
    <location>
        <begin position="149"/>
        <end position="169"/>
    </location>
</feature>
<feature type="transmembrane region" description="Helical" evidence="1">
    <location>
        <begin position="170"/>
        <end position="190"/>
    </location>
</feature>
<feature type="transmembrane region" description="Helical" evidence="1">
    <location>
        <begin position="240"/>
        <end position="260"/>
    </location>
</feature>
<feature type="transmembrane region" description="Helical" evidence="1">
    <location>
        <begin position="288"/>
        <end position="308"/>
    </location>
</feature>
<evidence type="ECO:0000255" key="1">
    <source>
        <dbReference type="HAMAP-Rule" id="MF_00154"/>
    </source>
</evidence>
<comment type="function">
    <text evidence="1">Converts heme B (protoheme IX) to heme O by substitution of the vinyl group on carbon 2 of heme B porphyrin ring with a hydroxyethyl farnesyl side group.</text>
</comment>
<comment type="catalytic activity">
    <reaction evidence="1">
        <text>heme b + (2E,6E)-farnesyl diphosphate + H2O = Fe(II)-heme o + diphosphate</text>
        <dbReference type="Rhea" id="RHEA:28070"/>
        <dbReference type="ChEBI" id="CHEBI:15377"/>
        <dbReference type="ChEBI" id="CHEBI:33019"/>
        <dbReference type="ChEBI" id="CHEBI:60344"/>
        <dbReference type="ChEBI" id="CHEBI:60530"/>
        <dbReference type="ChEBI" id="CHEBI:175763"/>
        <dbReference type="EC" id="2.5.1.141"/>
    </reaction>
</comment>
<comment type="pathway">
    <text evidence="1">Porphyrin-containing compound metabolism; heme O biosynthesis; heme O from protoheme: step 1/1.</text>
</comment>
<comment type="subcellular location">
    <subcellularLocation>
        <location evidence="1">Cell membrane</location>
        <topology evidence="1">Multi-pass membrane protein</topology>
    </subcellularLocation>
</comment>
<comment type="miscellaneous">
    <text evidence="1">Carbon 2 of the heme B porphyrin ring is defined according to the Fischer nomenclature.</text>
</comment>
<comment type="similarity">
    <text evidence="1">Belongs to the UbiA prenyltransferase family. Protoheme IX farnesyltransferase subfamily.</text>
</comment>
<protein>
    <recommendedName>
        <fullName evidence="1">Protoheme IX farnesyltransferase</fullName>
        <ecNumber evidence="1">2.5.1.141</ecNumber>
    </recommendedName>
    <alternativeName>
        <fullName evidence="1">Heme B farnesyltransferase</fullName>
    </alternativeName>
    <alternativeName>
        <fullName evidence="1">Heme O synthase</fullName>
    </alternativeName>
</protein>
<keyword id="KW-1003">Cell membrane</keyword>
<keyword id="KW-0350">Heme biosynthesis</keyword>
<keyword id="KW-0472">Membrane</keyword>
<keyword id="KW-1185">Reference proteome</keyword>
<keyword id="KW-0808">Transferase</keyword>
<keyword id="KW-0812">Transmembrane</keyword>
<keyword id="KW-1133">Transmembrane helix</keyword>
<dbReference type="EC" id="2.5.1.141" evidence="1"/>
<dbReference type="EMBL" id="AE016958">
    <property type="protein sequence ID" value="AAS03496.1"/>
    <property type="molecule type" value="Genomic_DNA"/>
</dbReference>
<dbReference type="RefSeq" id="WP_003876071.1">
    <property type="nucleotide sequence ID" value="NZ_CP106873.1"/>
</dbReference>
<dbReference type="SMR" id="Q741B3"/>
<dbReference type="STRING" id="262316.MAP_1179"/>
<dbReference type="KEGG" id="mpa:MAP_1179"/>
<dbReference type="eggNOG" id="COG0109">
    <property type="taxonomic scope" value="Bacteria"/>
</dbReference>
<dbReference type="HOGENOM" id="CLU_029631_0_1_11"/>
<dbReference type="UniPathway" id="UPA00834">
    <property type="reaction ID" value="UER00712"/>
</dbReference>
<dbReference type="Proteomes" id="UP000000580">
    <property type="component" value="Chromosome"/>
</dbReference>
<dbReference type="GO" id="GO:0005886">
    <property type="term" value="C:plasma membrane"/>
    <property type="evidence" value="ECO:0007669"/>
    <property type="project" value="UniProtKB-SubCell"/>
</dbReference>
<dbReference type="GO" id="GO:0008495">
    <property type="term" value="F:protoheme IX farnesyltransferase activity"/>
    <property type="evidence" value="ECO:0007669"/>
    <property type="project" value="UniProtKB-UniRule"/>
</dbReference>
<dbReference type="GO" id="GO:0048034">
    <property type="term" value="P:heme O biosynthetic process"/>
    <property type="evidence" value="ECO:0007669"/>
    <property type="project" value="UniProtKB-UniRule"/>
</dbReference>
<dbReference type="CDD" id="cd13957">
    <property type="entry name" value="PT_UbiA_Cox10"/>
    <property type="match status" value="1"/>
</dbReference>
<dbReference type="FunFam" id="1.10.357.140:FF:000001">
    <property type="entry name" value="Protoheme IX farnesyltransferase"/>
    <property type="match status" value="1"/>
</dbReference>
<dbReference type="Gene3D" id="1.10.357.140">
    <property type="entry name" value="UbiA prenyltransferase"/>
    <property type="match status" value="1"/>
</dbReference>
<dbReference type="HAMAP" id="MF_00154">
    <property type="entry name" value="CyoE_CtaB"/>
    <property type="match status" value="1"/>
</dbReference>
<dbReference type="InterPro" id="IPR006369">
    <property type="entry name" value="Protohaem_IX_farnesylTrfase"/>
</dbReference>
<dbReference type="InterPro" id="IPR000537">
    <property type="entry name" value="UbiA_prenyltransferase"/>
</dbReference>
<dbReference type="InterPro" id="IPR044878">
    <property type="entry name" value="UbiA_sf"/>
</dbReference>
<dbReference type="NCBIfam" id="TIGR01473">
    <property type="entry name" value="cyoE_ctaB"/>
    <property type="match status" value="1"/>
</dbReference>
<dbReference type="NCBIfam" id="NF003349">
    <property type="entry name" value="PRK04375.1-2"/>
    <property type="match status" value="1"/>
</dbReference>
<dbReference type="PANTHER" id="PTHR43448:SF7">
    <property type="entry name" value="4-HYDROXYBENZOATE SOLANESYLTRANSFERASE"/>
    <property type="match status" value="1"/>
</dbReference>
<dbReference type="PANTHER" id="PTHR43448">
    <property type="entry name" value="PROTOHEME IX FARNESYLTRANSFERASE, MITOCHONDRIAL"/>
    <property type="match status" value="1"/>
</dbReference>
<dbReference type="Pfam" id="PF01040">
    <property type="entry name" value="UbiA"/>
    <property type="match status" value="1"/>
</dbReference>
<accession>Q741B3</accession>
<sequence length="308" mass="33288">MSVRGRVAPSQTPSRIPGTVLAYLALTKPRVIELLLVTAIPAMLLAQRGTVNPLLIVNTLIGGMLAAGGANALNCVADADIDKVMKRTARRPLARAAVPTRNALVFGLVLTAGSFLWLWWTTNLLSGLLALATIAFYVFIYTLLLKRRTSQNVVWGGAAGCMPVMIGWSAVTGTIQWPALVMFAIIFFWTPPHTWALAMRYKDDYKAAGVPMLPAVATERQVTKQIVVYTWLTVLATLALALATGWLYAAVALVAGVWFLAMAHQLYAGVRAGEPVKPLRLFLQSNNYLAVVFCALAIDSAIGLPHLF</sequence>
<name>COXX_MYCPA</name>
<gene>
    <name evidence="1" type="primary">ctaB</name>
    <name type="ordered locus">MAP_1179</name>
</gene>
<reference key="1">
    <citation type="journal article" date="2005" name="Proc. Natl. Acad. Sci. U.S.A.">
        <title>The complete genome sequence of Mycobacterium avium subspecies paratuberculosis.</title>
        <authorList>
            <person name="Li L."/>
            <person name="Bannantine J.P."/>
            <person name="Zhang Q."/>
            <person name="Amonsin A."/>
            <person name="May B.J."/>
            <person name="Alt D."/>
            <person name="Banerji N."/>
            <person name="Kanjilal S."/>
            <person name="Kapur V."/>
        </authorList>
    </citation>
    <scope>NUCLEOTIDE SEQUENCE [LARGE SCALE GENOMIC DNA]</scope>
    <source>
        <strain>ATCC BAA-968 / K-10</strain>
    </source>
</reference>
<organism>
    <name type="scientific">Mycolicibacterium paratuberculosis (strain ATCC BAA-968 / K-10)</name>
    <name type="common">Mycobacterium paratuberculosis</name>
    <dbReference type="NCBI Taxonomy" id="262316"/>
    <lineage>
        <taxon>Bacteria</taxon>
        <taxon>Bacillati</taxon>
        <taxon>Actinomycetota</taxon>
        <taxon>Actinomycetes</taxon>
        <taxon>Mycobacteriales</taxon>
        <taxon>Mycobacteriaceae</taxon>
        <taxon>Mycobacterium</taxon>
        <taxon>Mycobacterium avium complex (MAC)</taxon>
    </lineage>
</organism>